<protein>
    <recommendedName>
        <fullName>Lysosomal-associated transmembrane protein 4A</fullName>
    </recommendedName>
</protein>
<dbReference type="EMBL" id="AB169909">
    <property type="protein sequence ID" value="BAE01990.1"/>
    <property type="molecule type" value="mRNA"/>
</dbReference>
<dbReference type="RefSeq" id="NP_001272251.1">
    <property type="nucleotide sequence ID" value="NM_001285322.1"/>
</dbReference>
<dbReference type="RefSeq" id="XP_045225666.1">
    <property type="nucleotide sequence ID" value="XM_045369731.2"/>
</dbReference>
<dbReference type="STRING" id="9541.ENSMFAP00000031408"/>
<dbReference type="Ensembl" id="ENSMFAT00000094749.1">
    <property type="protein sequence ID" value="ENSMFAP00000057898.1"/>
    <property type="gene ID" value="ENSMFAG00000036772.2"/>
</dbReference>
<dbReference type="GeneID" id="101867509"/>
<dbReference type="VEuPathDB" id="HostDB:ENSMFAG00000036772"/>
<dbReference type="eggNOG" id="ENOG502QSAX">
    <property type="taxonomic scope" value="Eukaryota"/>
</dbReference>
<dbReference type="GeneTree" id="ENSGT00940000153446"/>
<dbReference type="OMA" id="NCYKYII"/>
<dbReference type="Proteomes" id="UP000233100">
    <property type="component" value="Chromosome 13"/>
</dbReference>
<dbReference type="Bgee" id="ENSMFAG00000036772">
    <property type="expression patterns" value="Expressed in pituitary gland and 13 other cell types or tissues"/>
</dbReference>
<dbReference type="GO" id="GO:0031902">
    <property type="term" value="C:late endosome membrane"/>
    <property type="evidence" value="ECO:0000250"/>
    <property type="project" value="UniProtKB"/>
</dbReference>
<dbReference type="GO" id="GO:0005765">
    <property type="term" value="C:lysosomal membrane"/>
    <property type="evidence" value="ECO:0000250"/>
    <property type="project" value="UniProtKB"/>
</dbReference>
<dbReference type="InterPro" id="IPR004687">
    <property type="entry name" value="LAPTM4/5"/>
</dbReference>
<dbReference type="InterPro" id="IPR018396">
    <property type="entry name" value="LAPTM_4A/5"/>
</dbReference>
<dbReference type="InterPro" id="IPR051115">
    <property type="entry name" value="LAPTM_transporter"/>
</dbReference>
<dbReference type="NCBIfam" id="TIGR00799">
    <property type="entry name" value="mtp"/>
    <property type="match status" value="1"/>
</dbReference>
<dbReference type="PANTHER" id="PTHR12479">
    <property type="entry name" value="LYSOSOMAL-ASSOCIATED TRANSMEMBRANE PROTEIN"/>
    <property type="match status" value="1"/>
</dbReference>
<dbReference type="PANTHER" id="PTHR12479:SF5">
    <property type="entry name" value="LYSOSOMAL-ASSOCIATED TRANSMEMBRANE PROTEIN 4A"/>
    <property type="match status" value="1"/>
</dbReference>
<dbReference type="Pfam" id="PF03821">
    <property type="entry name" value="Mtp"/>
    <property type="match status" value="2"/>
</dbReference>
<proteinExistence type="evidence at transcript level"/>
<comment type="function">
    <text evidence="1">May function in the transport of nucleosides and/or nucleoside derivatives between the cytosol and the lumen of an intracellular membrane-bound compartment.</text>
</comment>
<comment type="subcellular location">
    <subcellularLocation>
        <location evidence="4">Endomembrane system</location>
        <topology evidence="4">Multi-pass membrane protein</topology>
    </subcellularLocation>
    <text evidence="4">May reside in an intracellular membrane-bound compartment.</text>
</comment>
<comment type="domain">
    <text evidence="1">The C-terminal domain is necessary for retention within intracellular membranes.</text>
</comment>
<comment type="similarity">
    <text evidence="4">Belongs to the LAPTM4/LAPTM5 transporter family.</text>
</comment>
<gene>
    <name type="primary">LAPTM4A</name>
    <name type="ORF">QtrA-13112</name>
</gene>
<feature type="chain" id="PRO_0000249715" description="Lysosomal-associated transmembrane protein 4A">
    <location>
        <begin position="1"/>
        <end position="233"/>
    </location>
</feature>
<feature type="transmembrane region" description="Helical" evidence="3">
    <location>
        <begin position="29"/>
        <end position="49"/>
    </location>
</feature>
<feature type="transmembrane region" description="Helical" evidence="3">
    <location>
        <begin position="82"/>
        <end position="102"/>
    </location>
</feature>
<feature type="transmembrane region" description="Helical" evidence="3">
    <location>
        <begin position="108"/>
        <end position="128"/>
    </location>
</feature>
<feature type="transmembrane region" description="Helical" evidence="3">
    <location>
        <begin position="160"/>
        <end position="180"/>
    </location>
</feature>
<feature type="modified residue" description="N-acetylmethionine" evidence="2">
    <location>
        <position position="1"/>
    </location>
</feature>
<accession>Q4R4I5</accession>
<organism>
    <name type="scientific">Macaca fascicularis</name>
    <name type="common">Crab-eating macaque</name>
    <name type="synonym">Cynomolgus monkey</name>
    <dbReference type="NCBI Taxonomy" id="9541"/>
    <lineage>
        <taxon>Eukaryota</taxon>
        <taxon>Metazoa</taxon>
        <taxon>Chordata</taxon>
        <taxon>Craniata</taxon>
        <taxon>Vertebrata</taxon>
        <taxon>Euteleostomi</taxon>
        <taxon>Mammalia</taxon>
        <taxon>Eutheria</taxon>
        <taxon>Euarchontoglires</taxon>
        <taxon>Primates</taxon>
        <taxon>Haplorrhini</taxon>
        <taxon>Catarrhini</taxon>
        <taxon>Cercopithecidae</taxon>
        <taxon>Cercopithecinae</taxon>
        <taxon>Macaca</taxon>
    </lineage>
</organism>
<sequence length="233" mass="26788">MVSMTFKRSRSDRFYSTRCCGCCHVRTGTIILGTWYMVVNLLMAILLTVEVTHPNSMPAVNIQYEVIGNYYSSERMADNACVLFAVSVLMFIISSMLVYGAISYQVGWLIPFFCYRLFDFVLSCLVAISSLTYLPRIKEYLDQLPDFPYKDDLLALDSSCLLFIVLVFFALFIIFKAYLINCVWNCYKYINNRNVPEIAVYPAFEAPPQYVLPTYEMAVKMPEKEPPPPYLPA</sequence>
<keyword id="KW-0007">Acetylation</keyword>
<keyword id="KW-0472">Membrane</keyword>
<keyword id="KW-1185">Reference proteome</keyword>
<keyword id="KW-0812">Transmembrane</keyword>
<keyword id="KW-1133">Transmembrane helix</keyword>
<keyword id="KW-0813">Transport</keyword>
<reference key="1">
    <citation type="submission" date="2005-06" db="EMBL/GenBank/DDBJ databases">
        <title>DNA sequences of macaque genes expressed in brain or testis and its evolutionary implications.</title>
        <authorList>
            <consortium name="International consortium for macaque cDNA sequencing and analysis"/>
        </authorList>
    </citation>
    <scope>NUCLEOTIDE SEQUENCE [LARGE SCALE MRNA]</scope>
    <source>
        <tissue>Temporal cortex</tissue>
    </source>
</reference>
<name>LAP4A_MACFA</name>
<evidence type="ECO:0000250" key="1"/>
<evidence type="ECO:0000250" key="2">
    <source>
        <dbReference type="UniProtKB" id="Q15012"/>
    </source>
</evidence>
<evidence type="ECO:0000255" key="3"/>
<evidence type="ECO:0000305" key="4"/>